<feature type="chain" id="PRO_0000048192" description="Tubulin alpha-5 chain">
    <location>
        <begin position="1"/>
        <end position="450"/>
    </location>
</feature>
<feature type="active site" evidence="2">
    <location>
        <position position="254"/>
    </location>
</feature>
<feature type="binding site" evidence="2">
    <location>
        <position position="11"/>
    </location>
    <ligand>
        <name>GTP</name>
        <dbReference type="ChEBI" id="CHEBI:37565"/>
    </ligand>
</feature>
<feature type="binding site" evidence="2">
    <location>
        <position position="71"/>
    </location>
    <ligand>
        <name>GTP</name>
        <dbReference type="ChEBI" id="CHEBI:37565"/>
    </ligand>
</feature>
<feature type="binding site" evidence="2">
    <location>
        <position position="71"/>
    </location>
    <ligand>
        <name>Mg(2+)</name>
        <dbReference type="ChEBI" id="CHEBI:18420"/>
    </ligand>
</feature>
<feature type="binding site" evidence="2">
    <location>
        <position position="144"/>
    </location>
    <ligand>
        <name>GTP</name>
        <dbReference type="ChEBI" id="CHEBI:37565"/>
    </ligand>
</feature>
<feature type="binding site" evidence="2">
    <location>
        <position position="145"/>
    </location>
    <ligand>
        <name>GTP</name>
        <dbReference type="ChEBI" id="CHEBI:37565"/>
    </ligand>
</feature>
<feature type="binding site" evidence="2">
    <location>
        <position position="179"/>
    </location>
    <ligand>
        <name>GTP</name>
        <dbReference type="ChEBI" id="CHEBI:37565"/>
    </ligand>
</feature>
<feature type="binding site" evidence="2">
    <location>
        <position position="206"/>
    </location>
    <ligand>
        <name>GTP</name>
        <dbReference type="ChEBI" id="CHEBI:37565"/>
    </ligand>
</feature>
<feature type="binding site" evidence="2">
    <location>
        <position position="228"/>
    </location>
    <ligand>
        <name>GTP</name>
        <dbReference type="ChEBI" id="CHEBI:37565"/>
    </ligand>
</feature>
<feature type="site" description="Involved in polymerization">
    <location>
        <position position="450"/>
    </location>
</feature>
<protein>
    <recommendedName>
        <fullName>Tubulin alpha-5 chain</fullName>
        <ecNumber evidence="2">3.6.5.-</ecNumber>
    </recommendedName>
    <alternativeName>
        <fullName>Alpha-5-tubulin</fullName>
    </alternativeName>
</protein>
<evidence type="ECO:0000250" key="1"/>
<evidence type="ECO:0000250" key="2">
    <source>
        <dbReference type="UniProtKB" id="P68363"/>
    </source>
</evidence>
<evidence type="ECO:0000305" key="3"/>
<sequence length="450" mass="49625">MREIISIHIGQAGIQVGNACWELYCLEHGIEHDGTMPSDSSVGVAHDAFNTFFSETGSGKHVPRAIFVDLEPTVIDEVRTGSYRQLFHPEQLISGKEDAANNFARGHYTVGKEIVDLCLDRVRKLADNCTGLQGFLVFNAVGGGTGSGLGSLLLERLSVDYGKKSKLGFTIYPSPQVSTAVVEPYNSVLSTHSLLEHTDVAVLLDNEAIYDICRRSLDIERPTYTNLNRLISQIISSLTTSLRFDGAINVDVTEFQTNLVPYPRIHFMLSSYAPVISAEKAYHEQLSVPEITNAVFEPSSMMAKCDPRHGKYMACCLMYRGDVVPKDVNAAVATIKTKRTVQFVDWCPTGFKCGINYQPPSVVPGGDLAKVQRAVCMISNNTAVAEVFSRIDHKFDLMYAKRAFVHWYVGEGMEEGEFSEAREDLAALEKDYEEVGAEGADDEGDEGDDY</sequence>
<accession>Q02245</accession>
<dbReference type="EC" id="3.6.5.-" evidence="2"/>
<dbReference type="EMBL" id="X63177">
    <property type="protein sequence ID" value="CAA44862.1"/>
    <property type="molecule type" value="mRNA"/>
</dbReference>
<dbReference type="EMBL" id="U05258">
    <property type="protein sequence ID" value="AAA16225.1"/>
    <property type="molecule type" value="mRNA"/>
</dbReference>
<dbReference type="EMBL" id="L27815">
    <property type="protein sequence ID" value="AAA33437.1"/>
    <property type="molecule type" value="mRNA"/>
</dbReference>
<dbReference type="PIR" id="S28982">
    <property type="entry name" value="S28982"/>
</dbReference>
<dbReference type="RefSeq" id="NP_001105324.1">
    <property type="nucleotide sequence ID" value="NM_001111854.1"/>
</dbReference>
<dbReference type="SMR" id="Q02245"/>
<dbReference type="FunCoup" id="Q02245">
    <property type="interactions" value="2357"/>
</dbReference>
<dbReference type="STRING" id="4577.Q02245"/>
<dbReference type="PaxDb" id="4577-GRMZM2G099167_P01"/>
<dbReference type="EnsemblPlants" id="Zm00001eb107490_T001">
    <property type="protein sequence ID" value="Zm00001eb107490_P001"/>
    <property type="gene ID" value="Zm00001eb107490"/>
</dbReference>
<dbReference type="GeneID" id="542248"/>
<dbReference type="Gramene" id="Zm00001eb107490_T001">
    <property type="protein sequence ID" value="Zm00001eb107490_P001"/>
    <property type="gene ID" value="Zm00001eb107490"/>
</dbReference>
<dbReference type="KEGG" id="zma:542248"/>
<dbReference type="MaizeGDB" id="17141"/>
<dbReference type="eggNOG" id="KOG1376">
    <property type="taxonomic scope" value="Eukaryota"/>
</dbReference>
<dbReference type="HOGENOM" id="CLU_015718_0_0_1"/>
<dbReference type="InParanoid" id="Q02245"/>
<dbReference type="OMA" id="ESCYDIC"/>
<dbReference type="OrthoDB" id="6049624at2759"/>
<dbReference type="Proteomes" id="UP000007305">
    <property type="component" value="Chromosome 2"/>
</dbReference>
<dbReference type="ExpressionAtlas" id="Q02245">
    <property type="expression patterns" value="baseline and differential"/>
</dbReference>
<dbReference type="GO" id="GO:0005737">
    <property type="term" value="C:cytoplasm"/>
    <property type="evidence" value="ECO:0000318"/>
    <property type="project" value="GO_Central"/>
</dbReference>
<dbReference type="GO" id="GO:0005874">
    <property type="term" value="C:microtubule"/>
    <property type="evidence" value="ECO:0000318"/>
    <property type="project" value="GO_Central"/>
</dbReference>
<dbReference type="GO" id="GO:0005525">
    <property type="term" value="F:GTP binding"/>
    <property type="evidence" value="ECO:0000318"/>
    <property type="project" value="GO_Central"/>
</dbReference>
<dbReference type="GO" id="GO:0016787">
    <property type="term" value="F:hydrolase activity"/>
    <property type="evidence" value="ECO:0007669"/>
    <property type="project" value="UniProtKB-KW"/>
</dbReference>
<dbReference type="GO" id="GO:0046872">
    <property type="term" value="F:metal ion binding"/>
    <property type="evidence" value="ECO:0007669"/>
    <property type="project" value="UniProtKB-KW"/>
</dbReference>
<dbReference type="GO" id="GO:0005200">
    <property type="term" value="F:structural constituent of cytoskeleton"/>
    <property type="evidence" value="ECO:0000318"/>
    <property type="project" value="GO_Central"/>
</dbReference>
<dbReference type="GO" id="GO:0000226">
    <property type="term" value="P:microtubule cytoskeleton organization"/>
    <property type="evidence" value="ECO:0000318"/>
    <property type="project" value="GO_Central"/>
</dbReference>
<dbReference type="GO" id="GO:0000278">
    <property type="term" value="P:mitotic cell cycle"/>
    <property type="evidence" value="ECO:0000318"/>
    <property type="project" value="GO_Central"/>
</dbReference>
<dbReference type="CDD" id="cd02186">
    <property type="entry name" value="alpha_tubulin"/>
    <property type="match status" value="1"/>
</dbReference>
<dbReference type="FunFam" id="1.10.287.600:FF:000005">
    <property type="entry name" value="Tubulin alpha chain"/>
    <property type="match status" value="1"/>
</dbReference>
<dbReference type="FunFam" id="3.30.1330.20:FF:000001">
    <property type="entry name" value="Tubulin alpha chain"/>
    <property type="match status" value="1"/>
</dbReference>
<dbReference type="FunFam" id="3.40.50.1440:FF:000004">
    <property type="entry name" value="Tubulin alpha chain"/>
    <property type="match status" value="1"/>
</dbReference>
<dbReference type="Gene3D" id="1.10.287.600">
    <property type="entry name" value="Helix hairpin bin"/>
    <property type="match status" value="1"/>
</dbReference>
<dbReference type="Gene3D" id="3.30.1330.20">
    <property type="entry name" value="Tubulin/FtsZ, C-terminal domain"/>
    <property type="match status" value="1"/>
</dbReference>
<dbReference type="Gene3D" id="3.40.50.1440">
    <property type="entry name" value="Tubulin/FtsZ, GTPase domain"/>
    <property type="match status" value="1"/>
</dbReference>
<dbReference type="InterPro" id="IPR002452">
    <property type="entry name" value="Alpha_tubulin"/>
</dbReference>
<dbReference type="InterPro" id="IPR013838">
    <property type="entry name" value="Beta-tubulin_BS"/>
</dbReference>
<dbReference type="InterPro" id="IPR008280">
    <property type="entry name" value="Tub_FtsZ_C"/>
</dbReference>
<dbReference type="InterPro" id="IPR000217">
    <property type="entry name" value="Tubulin"/>
</dbReference>
<dbReference type="InterPro" id="IPR037103">
    <property type="entry name" value="Tubulin/FtsZ-like_C"/>
</dbReference>
<dbReference type="InterPro" id="IPR018316">
    <property type="entry name" value="Tubulin/FtsZ_2-layer-sand-dom"/>
</dbReference>
<dbReference type="InterPro" id="IPR036525">
    <property type="entry name" value="Tubulin/FtsZ_GTPase_sf"/>
</dbReference>
<dbReference type="InterPro" id="IPR023123">
    <property type="entry name" value="Tubulin_C"/>
</dbReference>
<dbReference type="InterPro" id="IPR017975">
    <property type="entry name" value="Tubulin_CS"/>
</dbReference>
<dbReference type="InterPro" id="IPR003008">
    <property type="entry name" value="Tubulin_FtsZ_GTPase"/>
</dbReference>
<dbReference type="PANTHER" id="PTHR11588">
    <property type="entry name" value="TUBULIN"/>
    <property type="match status" value="1"/>
</dbReference>
<dbReference type="Pfam" id="PF00091">
    <property type="entry name" value="Tubulin"/>
    <property type="match status" value="1"/>
</dbReference>
<dbReference type="Pfam" id="PF03953">
    <property type="entry name" value="Tubulin_C"/>
    <property type="match status" value="1"/>
</dbReference>
<dbReference type="PRINTS" id="PR01162">
    <property type="entry name" value="ALPHATUBULIN"/>
</dbReference>
<dbReference type="PRINTS" id="PR01161">
    <property type="entry name" value="TUBULIN"/>
</dbReference>
<dbReference type="SMART" id="SM00864">
    <property type="entry name" value="Tubulin"/>
    <property type="match status" value="1"/>
</dbReference>
<dbReference type="SMART" id="SM00865">
    <property type="entry name" value="Tubulin_C"/>
    <property type="match status" value="1"/>
</dbReference>
<dbReference type="SUPFAM" id="SSF55307">
    <property type="entry name" value="Tubulin C-terminal domain-like"/>
    <property type="match status" value="1"/>
</dbReference>
<dbReference type="SUPFAM" id="SSF52490">
    <property type="entry name" value="Tubulin nucleotide-binding domain-like"/>
    <property type="match status" value="1"/>
</dbReference>
<dbReference type="PROSITE" id="PS00227">
    <property type="entry name" value="TUBULIN"/>
    <property type="match status" value="1"/>
</dbReference>
<proteinExistence type="evidence at transcript level"/>
<comment type="function">
    <text>Tubulin is the major constituent of microtubules, a cylinder consisting of laterally associated linear protofilaments composed of alpha- and beta-tubulin heterodimers. Microtubules grow by the addition of GTP-tubulin dimers to the microtubule end, where a stabilizing cap forms. Below the cap, tubulin dimers are in GDP-bound state, owing to GTPase activity of alpha-tubulin.</text>
</comment>
<comment type="catalytic activity">
    <reaction evidence="2">
        <text>GTP + H2O = GDP + phosphate + H(+)</text>
        <dbReference type="Rhea" id="RHEA:19669"/>
        <dbReference type="ChEBI" id="CHEBI:15377"/>
        <dbReference type="ChEBI" id="CHEBI:15378"/>
        <dbReference type="ChEBI" id="CHEBI:37565"/>
        <dbReference type="ChEBI" id="CHEBI:43474"/>
        <dbReference type="ChEBI" id="CHEBI:58189"/>
    </reaction>
    <physiologicalReaction direction="left-to-right" evidence="2">
        <dbReference type="Rhea" id="RHEA:19670"/>
    </physiologicalReaction>
</comment>
<comment type="cofactor">
    <cofactor evidence="2">
        <name>Mg(2+)</name>
        <dbReference type="ChEBI" id="CHEBI:18420"/>
    </cofactor>
</comment>
<comment type="subunit">
    <text>Dimer of alpha and beta chains. A typical microtubule is a hollow water-filled tube with an outer diameter of 25 nm and an inner diameter of 15 nM. Alpha-beta heterodimers associate head-to-tail to form protofilaments running lengthwise along the microtubule wall with the beta-tubulin subunit facing the microtubule plus end conferring a structural polarity. Microtubules usually have 13 protofilaments but different protofilament numbers can be found in some organisms and specialized cells.</text>
</comment>
<comment type="subcellular location">
    <subcellularLocation>
        <location>Cytoplasm</location>
        <location>Cytoskeleton</location>
    </subcellularLocation>
</comment>
<comment type="PTM">
    <text evidence="1">Undergoes a tyrosination/detyrosination cycle, the cyclic removal and re-addition of a C-terminal tyrosine residue by the enzymes tubulin tyrosine carboxypeptidase (TTCP) and tubulin tyrosine ligase (TTL), respectively.</text>
</comment>
<comment type="similarity">
    <text evidence="3">Belongs to the tubulin family.</text>
</comment>
<gene>
    <name type="primary">TUBA5</name>
    <name type="synonym">TUA5</name>
</gene>
<reference key="1">
    <citation type="journal article" date="1992" name="J. Mol. Biol.">
        <title>Alpha-tubulin gene family of maize (Zea mays L.). Evidence for two ancient alpha-tubulin genes in plants.</title>
        <authorList>
            <person name="Villemur R."/>
            <person name="Joyce C.M."/>
            <person name="Haas N.A."/>
            <person name="Goddard R.H."/>
            <person name="Kopczak S.D."/>
            <person name="Hussey P.J."/>
            <person name="Snustad D.P."/>
            <person name="Silflow C.D."/>
        </authorList>
    </citation>
    <scope>NUCLEOTIDE SEQUENCE [MRNA]</scope>
    <source>
        <strain>cv. B73</strain>
        <tissue>Shoot</tissue>
    </source>
</reference>
<reference key="2">
    <citation type="submission" date="1994-01" db="EMBL/GenBank/DDBJ databases">
        <authorList>
            <person name="Morejohn L.C."/>
            <person name="Huang C.Y."/>
            <person name="Hunsperger J.P."/>
            <person name="Rubenstein I."/>
            <person name="Solomon F."/>
        </authorList>
    </citation>
    <scope>NUCLEOTIDE SEQUENCE [MRNA]</scope>
    <source>
        <strain>cv. Black Mexican Sweet</strain>
    </source>
</reference>
<keyword id="KW-0963">Cytoplasm</keyword>
<keyword id="KW-0206">Cytoskeleton</keyword>
<keyword id="KW-0342">GTP-binding</keyword>
<keyword id="KW-0378">Hydrolase</keyword>
<keyword id="KW-0460">Magnesium</keyword>
<keyword id="KW-0479">Metal-binding</keyword>
<keyword id="KW-0493">Microtubule</keyword>
<keyword id="KW-0547">Nucleotide-binding</keyword>
<keyword id="KW-1185">Reference proteome</keyword>
<organism>
    <name type="scientific">Zea mays</name>
    <name type="common">Maize</name>
    <dbReference type="NCBI Taxonomy" id="4577"/>
    <lineage>
        <taxon>Eukaryota</taxon>
        <taxon>Viridiplantae</taxon>
        <taxon>Streptophyta</taxon>
        <taxon>Embryophyta</taxon>
        <taxon>Tracheophyta</taxon>
        <taxon>Spermatophyta</taxon>
        <taxon>Magnoliopsida</taxon>
        <taxon>Liliopsida</taxon>
        <taxon>Poales</taxon>
        <taxon>Poaceae</taxon>
        <taxon>PACMAD clade</taxon>
        <taxon>Panicoideae</taxon>
        <taxon>Andropogonodae</taxon>
        <taxon>Andropogoneae</taxon>
        <taxon>Tripsacinae</taxon>
        <taxon>Zea</taxon>
    </lineage>
</organism>
<name>TBA5_MAIZE</name>